<dbReference type="EMBL" id="AY958086">
    <property type="protein sequence ID" value="AAX45846.1"/>
    <property type="molecule type" value="Genomic_DNA"/>
</dbReference>
<dbReference type="RefSeq" id="YP_636529.1">
    <property type="nucleotide sequence ID" value="NC_008117.1"/>
</dbReference>
<dbReference type="SMR" id="Q32RJ7"/>
<dbReference type="GeneID" id="4108166"/>
<dbReference type="GO" id="GO:0009535">
    <property type="term" value="C:chloroplast thylakoid membrane"/>
    <property type="evidence" value="ECO:0007669"/>
    <property type="project" value="UniProtKB-SubCell"/>
</dbReference>
<dbReference type="GO" id="GO:0009539">
    <property type="term" value="C:photosystem II reaction center"/>
    <property type="evidence" value="ECO:0007669"/>
    <property type="project" value="InterPro"/>
</dbReference>
<dbReference type="GO" id="GO:0015979">
    <property type="term" value="P:photosynthesis"/>
    <property type="evidence" value="ECO:0007669"/>
    <property type="project" value="UniProtKB-UniRule"/>
</dbReference>
<dbReference type="HAMAP" id="MF_01317">
    <property type="entry name" value="PSII_PsbL"/>
    <property type="match status" value="1"/>
</dbReference>
<dbReference type="InterPro" id="IPR003372">
    <property type="entry name" value="PSII_PsbL"/>
</dbReference>
<dbReference type="InterPro" id="IPR037266">
    <property type="entry name" value="PSII_PsbL_sf"/>
</dbReference>
<dbReference type="NCBIfam" id="NF001972">
    <property type="entry name" value="PRK00753.1"/>
    <property type="match status" value="1"/>
</dbReference>
<dbReference type="Pfam" id="PF02419">
    <property type="entry name" value="PsbL"/>
    <property type="match status" value="1"/>
</dbReference>
<dbReference type="SUPFAM" id="SSF161017">
    <property type="entry name" value="Photosystem II reaction center protein L, PsbL"/>
    <property type="match status" value="1"/>
</dbReference>
<keyword id="KW-0150">Chloroplast</keyword>
<keyword id="KW-0472">Membrane</keyword>
<keyword id="KW-0602">Photosynthesis</keyword>
<keyword id="KW-0604">Photosystem II</keyword>
<keyword id="KW-0934">Plastid</keyword>
<keyword id="KW-0674">Reaction center</keyword>
<keyword id="KW-0793">Thylakoid</keyword>
<keyword id="KW-0812">Transmembrane</keyword>
<keyword id="KW-1133">Transmembrane helix</keyword>
<feature type="chain" id="PRO_0000276226" description="Photosystem II reaction center protein L">
    <location>
        <begin position="1"/>
        <end position="38"/>
    </location>
</feature>
<feature type="transmembrane region" description="Helical" evidence="1">
    <location>
        <begin position="17"/>
        <end position="37"/>
    </location>
</feature>
<gene>
    <name evidence="1" type="primary">psbL</name>
</gene>
<organism>
    <name type="scientific">Zygnema circumcarinatum</name>
    <name type="common">Green alga</name>
    <dbReference type="NCBI Taxonomy" id="35869"/>
    <lineage>
        <taxon>Eukaryota</taxon>
        <taxon>Viridiplantae</taxon>
        <taxon>Streptophyta</taxon>
        <taxon>Zygnematophyceae</taxon>
        <taxon>Zygnematophycidae</taxon>
        <taxon>Zygnematales</taxon>
        <taxon>Zygnemataceae</taxon>
        <taxon>Zygnema</taxon>
    </lineage>
</organism>
<geneLocation type="chloroplast"/>
<accession>Q32RJ7</accession>
<sequence length="38" mass="4436">MTQPNPNKQSVELNRTSLFWGLLLIFVLAVLFSSYFFN</sequence>
<reference key="1">
    <citation type="journal article" date="2005" name="BMC Biol.">
        <title>The complete chloroplast DNA sequences of the charophycean green algae Staurastrum and Zygnema reveal that the chloroplast genome underwent extensive changes during the evolution of the Zygnematales.</title>
        <authorList>
            <person name="Turmel M."/>
            <person name="Otis C."/>
            <person name="Lemieux C."/>
        </authorList>
    </citation>
    <scope>NUCLEOTIDE SEQUENCE [LARGE SCALE GENOMIC DNA]</scope>
</reference>
<proteinExistence type="inferred from homology"/>
<name>PSBL_ZYGCR</name>
<comment type="function">
    <text evidence="1">One of the components of the core complex of photosystem II (PSII). PSII is a light-driven water:plastoquinone oxidoreductase that uses light energy to abstract electrons from H(2)O, generating O(2) and a proton gradient subsequently used for ATP formation. It consists of a core antenna complex that captures photons, and an electron transfer chain that converts photonic excitation into a charge separation. This subunit is found at the monomer-monomer interface and is required for correct PSII assembly and/or dimerization.</text>
</comment>
<comment type="subunit">
    <text evidence="1">PSII is composed of 1 copy each of membrane proteins PsbA, PsbB, PsbC, PsbD, PsbE, PsbF, PsbH, PsbI, PsbJ, PsbK, PsbL, PsbM, PsbT, PsbX, PsbY, PsbZ, Psb30/Ycf12, at least 3 peripheral proteins of the oxygen-evolving complex and a large number of cofactors. It forms dimeric complexes.</text>
</comment>
<comment type="subcellular location">
    <subcellularLocation>
        <location evidence="1">Plastid</location>
        <location evidence="1">Chloroplast thylakoid membrane</location>
        <topology evidence="1">Single-pass membrane protein</topology>
    </subcellularLocation>
</comment>
<comment type="similarity">
    <text evidence="1">Belongs to the PsbL family.</text>
</comment>
<evidence type="ECO:0000255" key="1">
    <source>
        <dbReference type="HAMAP-Rule" id="MF_01317"/>
    </source>
</evidence>
<protein>
    <recommendedName>
        <fullName evidence="1">Photosystem II reaction center protein L</fullName>
        <shortName evidence="1">PSII-L</shortName>
    </recommendedName>
</protein>